<keyword id="KW-0028">Amino-acid biosynthesis</keyword>
<keyword id="KW-0378">Hydrolase</keyword>
<keyword id="KW-0460">Magnesium</keyword>
<keyword id="KW-0479">Metal-binding</keyword>
<keyword id="KW-0486">Methionine biosynthesis</keyword>
<keyword id="KW-1185">Reference proteome</keyword>
<proteinExistence type="inferred from homology"/>
<dbReference type="EC" id="3.1.3.77" evidence="1"/>
<dbReference type="EMBL" id="AM746676">
    <property type="protein sequence ID" value="CAN91709.1"/>
    <property type="molecule type" value="Genomic_DNA"/>
</dbReference>
<dbReference type="RefSeq" id="WP_012234186.1">
    <property type="nucleotide sequence ID" value="NC_010162.1"/>
</dbReference>
<dbReference type="SMR" id="A9FCY5"/>
<dbReference type="STRING" id="448385.sce1551"/>
<dbReference type="KEGG" id="scl:sce1551"/>
<dbReference type="eggNOG" id="COG4229">
    <property type="taxonomic scope" value="Bacteria"/>
</dbReference>
<dbReference type="HOGENOM" id="CLU_023273_0_0_7"/>
<dbReference type="OrthoDB" id="9797416at2"/>
<dbReference type="BioCyc" id="SCEL448385:SCE_RS08000-MONOMER"/>
<dbReference type="UniPathway" id="UPA00904">
    <property type="reaction ID" value="UER00876"/>
</dbReference>
<dbReference type="UniPathway" id="UPA00904">
    <property type="reaction ID" value="UER00877"/>
</dbReference>
<dbReference type="Proteomes" id="UP000002139">
    <property type="component" value="Chromosome"/>
</dbReference>
<dbReference type="GO" id="GO:0043715">
    <property type="term" value="F:2,3-diketo-5-methylthiopentyl-1-phosphate enolase activity"/>
    <property type="evidence" value="ECO:0007669"/>
    <property type="project" value="UniProtKB-UniRule"/>
</dbReference>
<dbReference type="GO" id="GO:0043716">
    <property type="term" value="F:2-hydroxy-3-keto-5-methylthiopentenyl-1-phosphate phosphatase activity"/>
    <property type="evidence" value="ECO:0007669"/>
    <property type="project" value="UniProtKB-UniRule"/>
</dbReference>
<dbReference type="GO" id="GO:0043874">
    <property type="term" value="F:acireductone synthase activity"/>
    <property type="evidence" value="ECO:0007669"/>
    <property type="project" value="UniProtKB-EC"/>
</dbReference>
<dbReference type="GO" id="GO:0000287">
    <property type="term" value="F:magnesium ion binding"/>
    <property type="evidence" value="ECO:0007669"/>
    <property type="project" value="UniProtKB-UniRule"/>
</dbReference>
<dbReference type="GO" id="GO:0019509">
    <property type="term" value="P:L-methionine salvage from methylthioadenosine"/>
    <property type="evidence" value="ECO:0007669"/>
    <property type="project" value="UniProtKB-UniRule"/>
</dbReference>
<dbReference type="CDD" id="cd01629">
    <property type="entry name" value="HAD_EP"/>
    <property type="match status" value="1"/>
</dbReference>
<dbReference type="Gene3D" id="1.10.720.60">
    <property type="match status" value="1"/>
</dbReference>
<dbReference type="Gene3D" id="3.40.50.1000">
    <property type="entry name" value="HAD superfamily/HAD-like"/>
    <property type="match status" value="1"/>
</dbReference>
<dbReference type="HAMAP" id="MF_01681">
    <property type="entry name" value="Salvage_MtnC"/>
    <property type="match status" value="1"/>
</dbReference>
<dbReference type="InterPro" id="IPR023943">
    <property type="entry name" value="Enolase-ppase_E1"/>
</dbReference>
<dbReference type="InterPro" id="IPR036412">
    <property type="entry name" value="HAD-like_sf"/>
</dbReference>
<dbReference type="InterPro" id="IPR006439">
    <property type="entry name" value="HAD-SF_hydro_IA"/>
</dbReference>
<dbReference type="InterPro" id="IPR023214">
    <property type="entry name" value="HAD_sf"/>
</dbReference>
<dbReference type="NCBIfam" id="TIGR01691">
    <property type="entry name" value="enolase-ppase"/>
    <property type="match status" value="1"/>
</dbReference>
<dbReference type="NCBIfam" id="TIGR01549">
    <property type="entry name" value="HAD-SF-IA-v1"/>
    <property type="match status" value="1"/>
</dbReference>
<dbReference type="NCBIfam" id="TIGR01509">
    <property type="entry name" value="HAD-SF-IA-v3"/>
    <property type="match status" value="1"/>
</dbReference>
<dbReference type="PANTHER" id="PTHR20371">
    <property type="entry name" value="ENOLASE-PHOSPHATASE E1"/>
    <property type="match status" value="1"/>
</dbReference>
<dbReference type="PANTHER" id="PTHR20371:SF1">
    <property type="entry name" value="ENOLASE-PHOSPHATASE E1"/>
    <property type="match status" value="1"/>
</dbReference>
<dbReference type="Pfam" id="PF00702">
    <property type="entry name" value="Hydrolase"/>
    <property type="match status" value="1"/>
</dbReference>
<dbReference type="PRINTS" id="PR00413">
    <property type="entry name" value="HADHALOGNASE"/>
</dbReference>
<dbReference type="SFLD" id="SFLDF00044">
    <property type="entry name" value="enolase-phosphatase"/>
    <property type="match status" value="1"/>
</dbReference>
<dbReference type="SFLD" id="SFLDS00003">
    <property type="entry name" value="Haloacid_Dehalogenase"/>
    <property type="match status" value="1"/>
</dbReference>
<dbReference type="SUPFAM" id="SSF56784">
    <property type="entry name" value="HAD-like"/>
    <property type="match status" value="1"/>
</dbReference>
<organism>
    <name type="scientific">Sorangium cellulosum (strain So ce56)</name>
    <name type="common">Polyangium cellulosum (strain So ce56)</name>
    <dbReference type="NCBI Taxonomy" id="448385"/>
    <lineage>
        <taxon>Bacteria</taxon>
        <taxon>Pseudomonadati</taxon>
        <taxon>Myxococcota</taxon>
        <taxon>Polyangia</taxon>
        <taxon>Polyangiales</taxon>
        <taxon>Polyangiaceae</taxon>
        <taxon>Sorangium</taxon>
    </lineage>
</organism>
<protein>
    <recommendedName>
        <fullName evidence="1">Enolase-phosphatase E1</fullName>
        <ecNumber evidence="1">3.1.3.77</ecNumber>
    </recommendedName>
    <alternativeName>
        <fullName evidence="1">2,3-diketo-5-methylthio-1-phosphopentane phosphatase</fullName>
    </alternativeName>
</protein>
<accession>A9FCY5</accession>
<gene>
    <name evidence="1" type="primary">mtnC</name>
    <name type="ordered locus">sce1551</name>
</gene>
<comment type="function">
    <text evidence="1">Bifunctional enzyme that catalyzes the enolization of 2,3-diketo-5-methylthiopentyl-1-phosphate (DK-MTP-1-P) into the intermediate 2-hydroxy-3-keto-5-methylthiopentenyl-1-phosphate (HK-MTPenyl-1-P), which is then dephosphorylated to form the acireductone 1,2-dihydroxy-3-keto-5-methylthiopentene (DHK-MTPene).</text>
</comment>
<comment type="catalytic activity">
    <reaction evidence="1">
        <text>5-methylsulfanyl-2,3-dioxopentyl phosphate + H2O = 1,2-dihydroxy-5-(methylsulfanyl)pent-1-en-3-one + phosphate</text>
        <dbReference type="Rhea" id="RHEA:21700"/>
        <dbReference type="ChEBI" id="CHEBI:15377"/>
        <dbReference type="ChEBI" id="CHEBI:43474"/>
        <dbReference type="ChEBI" id="CHEBI:49252"/>
        <dbReference type="ChEBI" id="CHEBI:58828"/>
        <dbReference type="EC" id="3.1.3.77"/>
    </reaction>
</comment>
<comment type="cofactor">
    <cofactor evidence="1">
        <name>Mg(2+)</name>
        <dbReference type="ChEBI" id="CHEBI:18420"/>
    </cofactor>
    <text evidence="1">Binds 1 Mg(2+) ion per subunit.</text>
</comment>
<comment type="pathway">
    <text evidence="1">Amino-acid biosynthesis; L-methionine biosynthesis via salvage pathway; L-methionine from S-methyl-5-thio-alpha-D-ribose 1-phosphate: step 3/6.</text>
</comment>
<comment type="pathway">
    <text evidence="1">Amino-acid biosynthesis; L-methionine biosynthesis via salvage pathway; L-methionine from S-methyl-5-thio-alpha-D-ribose 1-phosphate: step 4/6.</text>
</comment>
<comment type="subunit">
    <text evidence="1">Monomer.</text>
</comment>
<comment type="similarity">
    <text evidence="1">Belongs to the HAD-like hydrolase superfamily. MasA/MtnC family.</text>
</comment>
<evidence type="ECO:0000255" key="1">
    <source>
        <dbReference type="HAMAP-Rule" id="MF_01681"/>
    </source>
</evidence>
<name>MTNC_SORC5</name>
<reference key="1">
    <citation type="journal article" date="2007" name="Nat. Biotechnol.">
        <title>Complete genome sequence of the myxobacterium Sorangium cellulosum.</title>
        <authorList>
            <person name="Schneiker S."/>
            <person name="Perlova O."/>
            <person name="Kaiser O."/>
            <person name="Gerth K."/>
            <person name="Alici A."/>
            <person name="Altmeyer M.O."/>
            <person name="Bartels D."/>
            <person name="Bekel T."/>
            <person name="Beyer S."/>
            <person name="Bode E."/>
            <person name="Bode H.B."/>
            <person name="Bolten C.J."/>
            <person name="Choudhuri J.V."/>
            <person name="Doss S."/>
            <person name="Elnakady Y.A."/>
            <person name="Frank B."/>
            <person name="Gaigalat L."/>
            <person name="Goesmann A."/>
            <person name="Groeger C."/>
            <person name="Gross F."/>
            <person name="Jelsbak L."/>
            <person name="Jelsbak L."/>
            <person name="Kalinowski J."/>
            <person name="Kegler C."/>
            <person name="Knauber T."/>
            <person name="Konietzny S."/>
            <person name="Kopp M."/>
            <person name="Krause L."/>
            <person name="Krug D."/>
            <person name="Linke B."/>
            <person name="Mahmud T."/>
            <person name="Martinez-Arias R."/>
            <person name="McHardy A.C."/>
            <person name="Merai M."/>
            <person name="Meyer F."/>
            <person name="Mormann S."/>
            <person name="Munoz-Dorado J."/>
            <person name="Perez J."/>
            <person name="Pradella S."/>
            <person name="Rachid S."/>
            <person name="Raddatz G."/>
            <person name="Rosenau F."/>
            <person name="Rueckert C."/>
            <person name="Sasse F."/>
            <person name="Scharfe M."/>
            <person name="Schuster S.C."/>
            <person name="Suen G."/>
            <person name="Treuner-Lange A."/>
            <person name="Velicer G.J."/>
            <person name="Vorholter F.-J."/>
            <person name="Weissman K.J."/>
            <person name="Welch R.D."/>
            <person name="Wenzel S.C."/>
            <person name="Whitworth D.E."/>
            <person name="Wilhelm S."/>
            <person name="Wittmann C."/>
            <person name="Bloecker H."/>
            <person name="Puehler A."/>
            <person name="Mueller R."/>
        </authorList>
    </citation>
    <scope>NUCLEOTIDE SEQUENCE [LARGE SCALE GENOMIC DNA]</scope>
    <source>
        <strain>So ce56</strain>
    </source>
</reference>
<feature type="chain" id="PRO_0000357413" description="Enolase-phosphatase E1">
    <location>
        <begin position="1"/>
        <end position="232"/>
    </location>
</feature>
<sequence length="232" mass="24991">MAALPARAVLVDIEGTTTDVRFVHDTLFSVARRDLAAYVSAHAGGPEVEAARRAVARERGESEQAVSDGELAAALLAWIDQDRKETTLKALQGKIWRSAYESGGLRSHVYADVEPALRRWRDLGVTLAVFSSGSVEAQQLLFRHTTSGDLTGLFTAFFDTTTGPKREAGAYQRIAEALGLQPGEVLFLSDIVAELDAAAAAGMRTVQLLRPGTARDAESRHAVAERFDDIAP</sequence>